<accession>B4TQU3</accession>
<reference key="1">
    <citation type="journal article" date="2011" name="J. Bacteriol.">
        <title>Comparative genomics of 28 Salmonella enterica isolates: evidence for CRISPR-mediated adaptive sublineage evolution.</title>
        <authorList>
            <person name="Fricke W.F."/>
            <person name="Mammel M.K."/>
            <person name="McDermott P.F."/>
            <person name="Tartera C."/>
            <person name="White D.G."/>
            <person name="Leclerc J.E."/>
            <person name="Ravel J."/>
            <person name="Cebula T.A."/>
        </authorList>
    </citation>
    <scope>NUCLEOTIDE SEQUENCE [LARGE SCALE GENOMIC DNA]</scope>
    <source>
        <strain>CVM19633</strain>
    </source>
</reference>
<feature type="chain" id="PRO_1000099567" description="UvrABC system protein B">
    <location>
        <begin position="1"/>
        <end position="673"/>
    </location>
</feature>
<feature type="domain" description="Helicase ATP-binding" evidence="1">
    <location>
        <begin position="26"/>
        <end position="183"/>
    </location>
</feature>
<feature type="domain" description="Helicase C-terminal" evidence="1">
    <location>
        <begin position="431"/>
        <end position="597"/>
    </location>
</feature>
<feature type="domain" description="UVR" evidence="1">
    <location>
        <begin position="633"/>
        <end position="668"/>
    </location>
</feature>
<feature type="short sequence motif" description="Beta-hairpin">
    <location>
        <begin position="92"/>
        <end position="115"/>
    </location>
</feature>
<feature type="binding site" evidence="1">
    <location>
        <begin position="39"/>
        <end position="46"/>
    </location>
    <ligand>
        <name>ATP</name>
        <dbReference type="ChEBI" id="CHEBI:30616"/>
    </ligand>
</feature>
<keyword id="KW-0067">ATP-binding</keyword>
<keyword id="KW-0963">Cytoplasm</keyword>
<keyword id="KW-0227">DNA damage</keyword>
<keyword id="KW-0228">DNA excision</keyword>
<keyword id="KW-0234">DNA repair</keyword>
<keyword id="KW-0267">Excision nuclease</keyword>
<keyword id="KW-0347">Helicase</keyword>
<keyword id="KW-0378">Hydrolase</keyword>
<keyword id="KW-0547">Nucleotide-binding</keyword>
<keyword id="KW-0742">SOS response</keyword>
<dbReference type="EMBL" id="CP001127">
    <property type="protein sequence ID" value="ACF90627.1"/>
    <property type="molecule type" value="Genomic_DNA"/>
</dbReference>
<dbReference type="RefSeq" id="WP_000042502.1">
    <property type="nucleotide sequence ID" value="NC_011094.1"/>
</dbReference>
<dbReference type="SMR" id="B4TQU3"/>
<dbReference type="KEGG" id="sew:SeSA_A0948"/>
<dbReference type="HOGENOM" id="CLU_009621_2_1_6"/>
<dbReference type="Proteomes" id="UP000001865">
    <property type="component" value="Chromosome"/>
</dbReference>
<dbReference type="GO" id="GO:0005737">
    <property type="term" value="C:cytoplasm"/>
    <property type="evidence" value="ECO:0007669"/>
    <property type="project" value="UniProtKB-SubCell"/>
</dbReference>
<dbReference type="GO" id="GO:0009380">
    <property type="term" value="C:excinuclease repair complex"/>
    <property type="evidence" value="ECO:0007669"/>
    <property type="project" value="InterPro"/>
</dbReference>
<dbReference type="GO" id="GO:0005524">
    <property type="term" value="F:ATP binding"/>
    <property type="evidence" value="ECO:0007669"/>
    <property type="project" value="UniProtKB-UniRule"/>
</dbReference>
<dbReference type="GO" id="GO:0016887">
    <property type="term" value="F:ATP hydrolysis activity"/>
    <property type="evidence" value="ECO:0007669"/>
    <property type="project" value="InterPro"/>
</dbReference>
<dbReference type="GO" id="GO:0003677">
    <property type="term" value="F:DNA binding"/>
    <property type="evidence" value="ECO:0007669"/>
    <property type="project" value="UniProtKB-UniRule"/>
</dbReference>
<dbReference type="GO" id="GO:0009381">
    <property type="term" value="F:excinuclease ABC activity"/>
    <property type="evidence" value="ECO:0007669"/>
    <property type="project" value="UniProtKB-UniRule"/>
</dbReference>
<dbReference type="GO" id="GO:0004386">
    <property type="term" value="F:helicase activity"/>
    <property type="evidence" value="ECO:0007669"/>
    <property type="project" value="UniProtKB-KW"/>
</dbReference>
<dbReference type="GO" id="GO:0006289">
    <property type="term" value="P:nucleotide-excision repair"/>
    <property type="evidence" value="ECO:0007669"/>
    <property type="project" value="UniProtKB-UniRule"/>
</dbReference>
<dbReference type="GO" id="GO:0009432">
    <property type="term" value="P:SOS response"/>
    <property type="evidence" value="ECO:0007669"/>
    <property type="project" value="UniProtKB-UniRule"/>
</dbReference>
<dbReference type="CDD" id="cd17916">
    <property type="entry name" value="DEXHc_UvrB"/>
    <property type="match status" value="1"/>
</dbReference>
<dbReference type="CDD" id="cd18790">
    <property type="entry name" value="SF2_C_UvrB"/>
    <property type="match status" value="1"/>
</dbReference>
<dbReference type="FunFam" id="3.40.50.300:FF:000257">
    <property type="entry name" value="UvrABC system protein B"/>
    <property type="match status" value="1"/>
</dbReference>
<dbReference type="FunFam" id="3.40.50.300:FF:000401">
    <property type="entry name" value="UvrABC system protein B"/>
    <property type="match status" value="1"/>
</dbReference>
<dbReference type="FunFam" id="3.40.50.300:FF:000477">
    <property type="entry name" value="UvrABC system protein B"/>
    <property type="match status" value="1"/>
</dbReference>
<dbReference type="Gene3D" id="6.10.140.240">
    <property type="match status" value="1"/>
</dbReference>
<dbReference type="Gene3D" id="3.40.50.300">
    <property type="entry name" value="P-loop containing nucleotide triphosphate hydrolases"/>
    <property type="match status" value="3"/>
</dbReference>
<dbReference type="Gene3D" id="4.10.860.10">
    <property type="entry name" value="UVR domain"/>
    <property type="match status" value="1"/>
</dbReference>
<dbReference type="HAMAP" id="MF_00204">
    <property type="entry name" value="UvrB"/>
    <property type="match status" value="1"/>
</dbReference>
<dbReference type="InterPro" id="IPR006935">
    <property type="entry name" value="Helicase/UvrB_N"/>
</dbReference>
<dbReference type="InterPro" id="IPR014001">
    <property type="entry name" value="Helicase_ATP-bd"/>
</dbReference>
<dbReference type="InterPro" id="IPR001650">
    <property type="entry name" value="Helicase_C-like"/>
</dbReference>
<dbReference type="InterPro" id="IPR027417">
    <property type="entry name" value="P-loop_NTPase"/>
</dbReference>
<dbReference type="InterPro" id="IPR001943">
    <property type="entry name" value="UVR_dom"/>
</dbReference>
<dbReference type="InterPro" id="IPR036876">
    <property type="entry name" value="UVR_dom_sf"/>
</dbReference>
<dbReference type="InterPro" id="IPR004807">
    <property type="entry name" value="UvrB"/>
</dbReference>
<dbReference type="InterPro" id="IPR041471">
    <property type="entry name" value="UvrB_inter"/>
</dbReference>
<dbReference type="InterPro" id="IPR024759">
    <property type="entry name" value="UvrB_YAD/RRR_dom"/>
</dbReference>
<dbReference type="NCBIfam" id="NF003673">
    <property type="entry name" value="PRK05298.1"/>
    <property type="match status" value="1"/>
</dbReference>
<dbReference type="NCBIfam" id="TIGR00631">
    <property type="entry name" value="uvrb"/>
    <property type="match status" value="1"/>
</dbReference>
<dbReference type="PANTHER" id="PTHR24029">
    <property type="entry name" value="UVRABC SYSTEM PROTEIN B"/>
    <property type="match status" value="1"/>
</dbReference>
<dbReference type="PANTHER" id="PTHR24029:SF0">
    <property type="entry name" value="UVRABC SYSTEM PROTEIN B"/>
    <property type="match status" value="1"/>
</dbReference>
<dbReference type="Pfam" id="PF00271">
    <property type="entry name" value="Helicase_C"/>
    <property type="match status" value="1"/>
</dbReference>
<dbReference type="Pfam" id="PF04851">
    <property type="entry name" value="ResIII"/>
    <property type="match status" value="1"/>
</dbReference>
<dbReference type="Pfam" id="PF02151">
    <property type="entry name" value="UVR"/>
    <property type="match status" value="1"/>
</dbReference>
<dbReference type="Pfam" id="PF12344">
    <property type="entry name" value="UvrB"/>
    <property type="match status" value="1"/>
</dbReference>
<dbReference type="Pfam" id="PF17757">
    <property type="entry name" value="UvrB_inter"/>
    <property type="match status" value="1"/>
</dbReference>
<dbReference type="SMART" id="SM00487">
    <property type="entry name" value="DEXDc"/>
    <property type="match status" value="1"/>
</dbReference>
<dbReference type="SMART" id="SM00490">
    <property type="entry name" value="HELICc"/>
    <property type="match status" value="1"/>
</dbReference>
<dbReference type="SUPFAM" id="SSF46600">
    <property type="entry name" value="C-terminal UvrC-binding domain of UvrB"/>
    <property type="match status" value="1"/>
</dbReference>
<dbReference type="SUPFAM" id="SSF52540">
    <property type="entry name" value="P-loop containing nucleoside triphosphate hydrolases"/>
    <property type="match status" value="2"/>
</dbReference>
<dbReference type="PROSITE" id="PS51192">
    <property type="entry name" value="HELICASE_ATP_BIND_1"/>
    <property type="match status" value="1"/>
</dbReference>
<dbReference type="PROSITE" id="PS51194">
    <property type="entry name" value="HELICASE_CTER"/>
    <property type="match status" value="1"/>
</dbReference>
<dbReference type="PROSITE" id="PS50151">
    <property type="entry name" value="UVR"/>
    <property type="match status" value="1"/>
</dbReference>
<organism>
    <name type="scientific">Salmonella schwarzengrund (strain CVM19633)</name>
    <dbReference type="NCBI Taxonomy" id="439843"/>
    <lineage>
        <taxon>Bacteria</taxon>
        <taxon>Pseudomonadati</taxon>
        <taxon>Pseudomonadota</taxon>
        <taxon>Gammaproteobacteria</taxon>
        <taxon>Enterobacterales</taxon>
        <taxon>Enterobacteriaceae</taxon>
        <taxon>Salmonella</taxon>
    </lineage>
</organism>
<name>UVRB_SALSV</name>
<sequence>MSKPFKLNSAFKPSGDQPDAIRRLEEGLEDGLAHQTLLGVTGSGKTFTIANVIADLQRPTMVLAPNKTLAAQLYGEMKEFFPENAVEYFVSYYDYYQPEAYVPSSDTFIEKDASVNEHIEQMRLSATKALLERRDVVVVASVSAIYGLGDPDLYLKMMLHLTVGMLIDQRAILRRLAELQYTRNDQAFQRGTFRVRGEVIDIFPAESDDIALRVELFDEEVERLSLFDPLTGQVESTVPRYTIYPKTHYVTPRERILQAMEEIKDELADRRKVLLANNKLLEEQRLSQRTQFDLEMMNELGYCSGIENYSRFLSGRGPGEPPPTLFDYLPADGLLVVDESHVTIPQIGGMYRGDRARKETLVEYGFRLPSALDNRPLKFEEFEALAPQTIYVSATPGNYELEKSGDEVVDQVVRPTGLLDPIIEVRPVATQVDDLLSEIRQRAAINERVLVTTLTKRMAEDLTEYLEEHGERVRYLHSDIDTVERMEIIRDLRLGEFDVLVGINLLREGLDMPEVSLVAILDADKEGFLRSERSLIQTIGRAARNVNGKAILYGDKITPSMAKAIGETERRREKQQKYNEEHGITPQGLNKKVVDILALGQNIAKTKAKGKGKGRSTAKAGIVELDMTPKALQQKIHELEGQMMQHAQNLEFEEAAQIRDQLHQLRELFIAAS</sequence>
<comment type="function">
    <text evidence="1">The UvrABC repair system catalyzes the recognition and processing of DNA lesions. A damage recognition complex composed of 2 UvrA and 2 UvrB subunits scans DNA for abnormalities. Upon binding of the UvrA(2)B(2) complex to a putative damaged site, the DNA wraps around one UvrB monomer. DNA wrap is dependent on ATP binding by UvrB and probably causes local melting of the DNA helix, facilitating insertion of UvrB beta-hairpin between the DNA strands. Then UvrB probes one DNA strand for the presence of a lesion. If a lesion is found the UvrA subunits dissociate and the UvrB-DNA preincision complex is formed. This complex is subsequently bound by UvrC and the second UvrB is released. If no lesion is found, the DNA wraps around the other UvrB subunit that will check the other stand for damage.</text>
</comment>
<comment type="subunit">
    <text evidence="1">Forms a heterotetramer with UvrA during the search for lesions. Interacts with UvrC in an incision complex.</text>
</comment>
<comment type="subcellular location">
    <subcellularLocation>
        <location evidence="1">Cytoplasm</location>
    </subcellularLocation>
</comment>
<comment type="domain">
    <text evidence="1">The beta-hairpin motif is involved in DNA binding.</text>
</comment>
<comment type="similarity">
    <text evidence="1">Belongs to the UvrB family.</text>
</comment>
<evidence type="ECO:0000255" key="1">
    <source>
        <dbReference type="HAMAP-Rule" id="MF_00204"/>
    </source>
</evidence>
<gene>
    <name evidence="1" type="primary">uvrB</name>
    <name type="ordered locus">SeSA_A0948</name>
</gene>
<protein>
    <recommendedName>
        <fullName evidence="1">UvrABC system protein B</fullName>
        <shortName evidence="1">Protein UvrB</shortName>
    </recommendedName>
    <alternativeName>
        <fullName evidence="1">Excinuclease ABC subunit B</fullName>
    </alternativeName>
</protein>
<proteinExistence type="inferred from homology"/>